<keyword id="KW-0067">ATP-binding</keyword>
<keyword id="KW-0436">Ligase</keyword>
<keyword id="KW-0496">Mitochondrion</keyword>
<keyword id="KW-0547">Nucleotide-binding</keyword>
<keyword id="KW-0648">Protein biosynthesis</keyword>
<keyword id="KW-1185">Reference proteome</keyword>
<dbReference type="EC" id="6.3.5.7" evidence="1"/>
<dbReference type="EMBL" id="BC089213">
    <property type="protein sequence ID" value="AAH89213.1"/>
    <property type="molecule type" value="mRNA"/>
</dbReference>
<dbReference type="RefSeq" id="NP_001014056.1">
    <property type="nucleotide sequence ID" value="NM_001014034.2"/>
</dbReference>
<dbReference type="RefSeq" id="XP_006256650.1">
    <property type="nucleotide sequence ID" value="XM_006256588.3"/>
</dbReference>
<dbReference type="SMR" id="Q5FWT5"/>
<dbReference type="FunCoup" id="Q5FWT5">
    <property type="interactions" value="1584"/>
</dbReference>
<dbReference type="STRING" id="10116.ENSRNOP00000018891"/>
<dbReference type="PhosphoSitePlus" id="Q5FWT5"/>
<dbReference type="PaxDb" id="10116-ENSRNOP00000018891"/>
<dbReference type="Ensembl" id="ENSRNOT00000018892.8">
    <property type="protein sequence ID" value="ENSRNOP00000018891.5"/>
    <property type="gene ID" value="ENSRNOG00000026049.7"/>
</dbReference>
<dbReference type="GeneID" id="309911"/>
<dbReference type="KEGG" id="rno:309911"/>
<dbReference type="AGR" id="RGD:1359490"/>
<dbReference type="CTD" id="55278"/>
<dbReference type="RGD" id="1359490">
    <property type="gene designation" value="Qrsl1"/>
</dbReference>
<dbReference type="eggNOG" id="KOG1211">
    <property type="taxonomic scope" value="Eukaryota"/>
</dbReference>
<dbReference type="GeneTree" id="ENSGT00550000074866"/>
<dbReference type="HOGENOM" id="CLU_009600_7_6_1"/>
<dbReference type="InParanoid" id="Q5FWT5"/>
<dbReference type="OMA" id="QPASYCG"/>
<dbReference type="OrthoDB" id="45141at9989"/>
<dbReference type="PhylomeDB" id="Q5FWT5"/>
<dbReference type="TreeFam" id="TF313766"/>
<dbReference type="PRO" id="PR:Q5FWT5"/>
<dbReference type="Proteomes" id="UP000002494">
    <property type="component" value="Chromosome 20"/>
</dbReference>
<dbReference type="Bgee" id="ENSRNOG00000026049">
    <property type="expression patterns" value="Expressed in heart and 19 other cell types or tissues"/>
</dbReference>
<dbReference type="GO" id="GO:0030956">
    <property type="term" value="C:glutamyl-tRNA(Gln) amidotransferase complex"/>
    <property type="evidence" value="ECO:0000266"/>
    <property type="project" value="RGD"/>
</dbReference>
<dbReference type="GO" id="GO:0005739">
    <property type="term" value="C:mitochondrion"/>
    <property type="evidence" value="ECO:0000266"/>
    <property type="project" value="RGD"/>
</dbReference>
<dbReference type="GO" id="GO:0005524">
    <property type="term" value="F:ATP binding"/>
    <property type="evidence" value="ECO:0007669"/>
    <property type="project" value="UniProtKB-KW"/>
</dbReference>
<dbReference type="GO" id="GO:0050567">
    <property type="term" value="F:glutaminyl-tRNA synthase (glutamine-hydrolyzing) activity"/>
    <property type="evidence" value="ECO:0000318"/>
    <property type="project" value="GO_Central"/>
</dbReference>
<dbReference type="GO" id="GO:0070681">
    <property type="term" value="P:glutaminyl-tRNAGln biosynthesis via transamidation"/>
    <property type="evidence" value="ECO:0000266"/>
    <property type="project" value="RGD"/>
</dbReference>
<dbReference type="GO" id="GO:0032543">
    <property type="term" value="P:mitochondrial translation"/>
    <property type="evidence" value="ECO:0000266"/>
    <property type="project" value="RGD"/>
</dbReference>
<dbReference type="GO" id="GO:0031647">
    <property type="term" value="P:regulation of protein stability"/>
    <property type="evidence" value="ECO:0000266"/>
    <property type="project" value="RGD"/>
</dbReference>
<dbReference type="FunFam" id="3.90.1300.10:FF:000002">
    <property type="entry name" value="Glutamyl-tRNA(Gln) amidotransferase subunit A, mitochondrial"/>
    <property type="match status" value="1"/>
</dbReference>
<dbReference type="Gene3D" id="3.90.1300.10">
    <property type="entry name" value="Amidase signature (AS) domain"/>
    <property type="match status" value="1"/>
</dbReference>
<dbReference type="HAMAP" id="MF_00120">
    <property type="entry name" value="GatA"/>
    <property type="match status" value="1"/>
</dbReference>
<dbReference type="InterPro" id="IPR000120">
    <property type="entry name" value="Amidase"/>
</dbReference>
<dbReference type="InterPro" id="IPR023631">
    <property type="entry name" value="Amidase_dom"/>
</dbReference>
<dbReference type="InterPro" id="IPR036928">
    <property type="entry name" value="AS_sf"/>
</dbReference>
<dbReference type="InterPro" id="IPR004412">
    <property type="entry name" value="GatA"/>
</dbReference>
<dbReference type="NCBIfam" id="TIGR00132">
    <property type="entry name" value="gatA"/>
    <property type="match status" value="1"/>
</dbReference>
<dbReference type="PANTHER" id="PTHR11895:SF7">
    <property type="entry name" value="GLUTAMYL-TRNA(GLN) AMIDOTRANSFERASE SUBUNIT A, MITOCHONDRIAL"/>
    <property type="match status" value="1"/>
</dbReference>
<dbReference type="PANTHER" id="PTHR11895">
    <property type="entry name" value="TRANSAMIDASE"/>
    <property type="match status" value="1"/>
</dbReference>
<dbReference type="Pfam" id="PF01425">
    <property type="entry name" value="Amidase"/>
    <property type="match status" value="1"/>
</dbReference>
<dbReference type="SUPFAM" id="SSF75304">
    <property type="entry name" value="Amidase signature (AS) enzymes"/>
    <property type="match status" value="1"/>
</dbReference>
<reference key="1">
    <citation type="journal article" date="2004" name="Genome Res.">
        <title>The status, quality, and expansion of the NIH full-length cDNA project: the Mammalian Gene Collection (MGC).</title>
        <authorList>
            <consortium name="The MGC Project Team"/>
        </authorList>
    </citation>
    <scope>NUCLEOTIDE SEQUENCE [LARGE SCALE MRNA]</scope>
    <source>
        <tissue>Ovary</tissue>
    </source>
</reference>
<gene>
    <name type="primary">Qrsl1</name>
</gene>
<evidence type="ECO:0000255" key="1">
    <source>
        <dbReference type="HAMAP-Rule" id="MF_03150"/>
    </source>
</evidence>
<organism>
    <name type="scientific">Rattus norvegicus</name>
    <name type="common">Rat</name>
    <dbReference type="NCBI Taxonomy" id="10116"/>
    <lineage>
        <taxon>Eukaryota</taxon>
        <taxon>Metazoa</taxon>
        <taxon>Chordata</taxon>
        <taxon>Craniata</taxon>
        <taxon>Vertebrata</taxon>
        <taxon>Euteleostomi</taxon>
        <taxon>Mammalia</taxon>
        <taxon>Eutheria</taxon>
        <taxon>Euarchontoglires</taxon>
        <taxon>Glires</taxon>
        <taxon>Rodentia</taxon>
        <taxon>Myomorpha</taxon>
        <taxon>Muroidea</taxon>
        <taxon>Muridae</taxon>
        <taxon>Murinae</taxon>
        <taxon>Rattus</taxon>
    </lineage>
</organism>
<name>GATA_RAT</name>
<feature type="chain" id="PRO_0000316770" description="Glutamyl-tRNA(Gln) amidotransferase subunit A, mitochondrial">
    <location>
        <begin position="1"/>
        <end position="525"/>
    </location>
</feature>
<feature type="active site" description="Charge relay system" evidence="1">
    <location>
        <position position="76"/>
    </location>
</feature>
<feature type="active site" description="Charge relay system" evidence="1">
    <location>
        <position position="168"/>
    </location>
</feature>
<feature type="active site" description="Acyl-ester intermediate" evidence="1">
    <location>
        <position position="192"/>
    </location>
</feature>
<protein>
    <recommendedName>
        <fullName evidence="1">Glutamyl-tRNA(Gln) amidotransferase subunit A, mitochondrial</fullName>
        <shortName evidence="1">Glu-AdT subunit A</shortName>
        <ecNumber evidence="1">6.3.5.7</ecNumber>
    </recommendedName>
    <alternativeName>
        <fullName evidence="1">Glutaminyl-tRNA synthase-like protein 1</fullName>
    </alternativeName>
</protein>
<comment type="function">
    <text evidence="1">Allows the formation of correctly charged Gln-tRNA(Gln) through the transamidation of misacylated Glu-tRNA(Gln) in the mitochondria. The reaction takes place in the presence of glutamine and ATP through an activated gamma-phospho-Glu-tRNA(Gln).</text>
</comment>
<comment type="catalytic activity">
    <reaction evidence="1">
        <text>L-glutamyl-tRNA(Gln) + L-glutamine + ATP + H2O = L-glutaminyl-tRNA(Gln) + L-glutamate + ADP + phosphate + H(+)</text>
        <dbReference type="Rhea" id="RHEA:17521"/>
        <dbReference type="Rhea" id="RHEA-COMP:9681"/>
        <dbReference type="Rhea" id="RHEA-COMP:9684"/>
        <dbReference type="ChEBI" id="CHEBI:15377"/>
        <dbReference type="ChEBI" id="CHEBI:15378"/>
        <dbReference type="ChEBI" id="CHEBI:29985"/>
        <dbReference type="ChEBI" id="CHEBI:30616"/>
        <dbReference type="ChEBI" id="CHEBI:43474"/>
        <dbReference type="ChEBI" id="CHEBI:58359"/>
        <dbReference type="ChEBI" id="CHEBI:78520"/>
        <dbReference type="ChEBI" id="CHEBI:78521"/>
        <dbReference type="ChEBI" id="CHEBI:456216"/>
        <dbReference type="EC" id="6.3.5.7"/>
    </reaction>
</comment>
<comment type="subunit">
    <text evidence="1">Subunit of the heterotrimeric GatCAB amidotransferase (AdT) complex, composed of A (QRSL1), B (GATB) and C (GATC) subunits.</text>
</comment>
<comment type="subcellular location">
    <subcellularLocation>
        <location evidence="1">Mitochondrion</location>
    </subcellularLocation>
</comment>
<comment type="similarity">
    <text evidence="1">Belongs to the amidase family. GatA subfamily.</text>
</comment>
<accession>Q5FWT5</accession>
<sequence length="525" mass="56838">MLGRTLREVSSALKQGHITPTELCKKCLSLIKKTKYLNAYITVSEEVALKQAEESEKRYKQGQSLGDLDGIPVAVKDNFSTSGIETTCASNMLKGYLPPYNATVVQRLLDQGALLMGKTNLDEFAMGSGSTDGVFGPVKNPWTYSKQYRERSRQDAQEDSHWLITGGSSGGSAAAVAAFTCFAALGSDTGGSTRNPAAHCGTVGFKPSYGLVSRHGLIPLVNSMDVPGIFTRCVDDTAIVLGVLAGHDPKDSTTVNDPVKPTTLPSVPDVSGLCIGIPKEYLVPELSSEIRSLWSQAADLFEAEGARVIEVCLPHTCYSIVCYHVLCTSEVASNMARFDGLQYGHRSAVDMSSTEALYAATRQEGFNDVVKGRILSGNFFLLKENYENYFVKAQKVRRLIVNDFVNVFGSGVDVLLTPTTLTQAVPYLEFIKEDNRTRSAQDDIFTQAVNMAGLPAVNVPVALSSQGLPIGLQLIGRAFCDQQLLTVAKWFEKQVQFPVIQLQDLMDDGSLVPENGKLTSGSLTQ</sequence>
<proteinExistence type="evidence at transcript level"/>